<evidence type="ECO:0000255" key="1">
    <source>
        <dbReference type="HAMAP-Rule" id="MF_02103"/>
    </source>
</evidence>
<dbReference type="EMBL" id="CP000903">
    <property type="protein sequence ID" value="ABY42466.1"/>
    <property type="molecule type" value="Genomic_DNA"/>
</dbReference>
<dbReference type="RefSeq" id="WP_012260585.1">
    <property type="nucleotide sequence ID" value="NC_010184.1"/>
</dbReference>
<dbReference type="KEGG" id="bwe:BcerKBAB4_1219"/>
<dbReference type="eggNOG" id="COG1139">
    <property type="taxonomic scope" value="Bacteria"/>
</dbReference>
<dbReference type="HOGENOM" id="CLU_027059_2_0_9"/>
<dbReference type="Proteomes" id="UP000002154">
    <property type="component" value="Chromosome"/>
</dbReference>
<dbReference type="GO" id="GO:0051539">
    <property type="term" value="F:4 iron, 4 sulfur cluster binding"/>
    <property type="evidence" value="ECO:0007669"/>
    <property type="project" value="UniProtKB-KW"/>
</dbReference>
<dbReference type="GO" id="GO:0046872">
    <property type="term" value="F:metal ion binding"/>
    <property type="evidence" value="ECO:0007669"/>
    <property type="project" value="UniProtKB-KW"/>
</dbReference>
<dbReference type="GO" id="GO:0006089">
    <property type="term" value="P:lactate metabolic process"/>
    <property type="evidence" value="ECO:0007669"/>
    <property type="project" value="UniProtKB-UniRule"/>
</dbReference>
<dbReference type="Gene3D" id="1.10.1060.10">
    <property type="entry name" value="Alpha-helical ferredoxin"/>
    <property type="match status" value="1"/>
</dbReference>
<dbReference type="Gene3D" id="3.40.50.10420">
    <property type="entry name" value="NagB/RpiA/CoA transferase-like"/>
    <property type="match status" value="1"/>
</dbReference>
<dbReference type="HAMAP" id="MF_02103">
    <property type="entry name" value="LutB"/>
    <property type="match status" value="1"/>
</dbReference>
<dbReference type="InterPro" id="IPR017896">
    <property type="entry name" value="4Fe4S_Fe-S-bd"/>
</dbReference>
<dbReference type="InterPro" id="IPR017900">
    <property type="entry name" value="4Fe4S_Fe_S_CS"/>
</dbReference>
<dbReference type="InterPro" id="IPR024185">
    <property type="entry name" value="FTHF_cligase-like_sf"/>
</dbReference>
<dbReference type="InterPro" id="IPR009051">
    <property type="entry name" value="Helical_ferredxn"/>
</dbReference>
<dbReference type="InterPro" id="IPR003741">
    <property type="entry name" value="LUD_dom"/>
</dbReference>
<dbReference type="InterPro" id="IPR022825">
    <property type="entry name" value="LutB"/>
</dbReference>
<dbReference type="InterPro" id="IPR004452">
    <property type="entry name" value="LutB/LldF"/>
</dbReference>
<dbReference type="InterPro" id="IPR024569">
    <property type="entry name" value="LutB_C"/>
</dbReference>
<dbReference type="InterPro" id="IPR037171">
    <property type="entry name" value="NagB/RpiA_transferase-like"/>
</dbReference>
<dbReference type="NCBIfam" id="TIGR00273">
    <property type="entry name" value="LutB/LldF family L-lactate oxidation iron-sulfur protein"/>
    <property type="match status" value="1"/>
</dbReference>
<dbReference type="PANTHER" id="PTHR47153">
    <property type="entry name" value="LACTATE UTILIZATION PROTEIN B"/>
    <property type="match status" value="1"/>
</dbReference>
<dbReference type="PANTHER" id="PTHR47153:SF2">
    <property type="entry name" value="LACTATE UTILIZATION PROTEIN B"/>
    <property type="match status" value="1"/>
</dbReference>
<dbReference type="Pfam" id="PF13183">
    <property type="entry name" value="Fer4_8"/>
    <property type="match status" value="1"/>
</dbReference>
<dbReference type="Pfam" id="PF02589">
    <property type="entry name" value="LUD_dom"/>
    <property type="match status" value="1"/>
</dbReference>
<dbReference type="Pfam" id="PF11870">
    <property type="entry name" value="LutB_C"/>
    <property type="match status" value="1"/>
</dbReference>
<dbReference type="SUPFAM" id="SSF46548">
    <property type="entry name" value="alpha-helical ferredoxin"/>
    <property type="match status" value="1"/>
</dbReference>
<dbReference type="SUPFAM" id="SSF100950">
    <property type="entry name" value="NagB/RpiA/CoA transferase-like"/>
    <property type="match status" value="1"/>
</dbReference>
<dbReference type="PROSITE" id="PS00198">
    <property type="entry name" value="4FE4S_FER_1"/>
    <property type="match status" value="1"/>
</dbReference>
<name>LUTB2_BACMK</name>
<feature type="chain" id="PRO_0000383979" description="Lactate utilization protein B 2">
    <location>
        <begin position="1"/>
        <end position="473"/>
    </location>
</feature>
<feature type="domain" description="4Fe-4S ferredoxin-type 1" evidence="1">
    <location>
        <begin position="302"/>
        <end position="332"/>
    </location>
</feature>
<feature type="domain" description="4Fe-4S ferredoxin-type 2" evidence="1">
    <location>
        <begin position="351"/>
        <end position="380"/>
    </location>
</feature>
<feature type="binding site" evidence="1">
    <location>
        <position position="311"/>
    </location>
    <ligand>
        <name>[4Fe-4S] cluster</name>
        <dbReference type="ChEBI" id="CHEBI:49883"/>
        <label>1</label>
    </ligand>
</feature>
<feature type="binding site" evidence="1">
    <location>
        <position position="314"/>
    </location>
    <ligand>
        <name>[4Fe-4S] cluster</name>
        <dbReference type="ChEBI" id="CHEBI:49883"/>
        <label>1</label>
    </ligand>
</feature>
<feature type="binding site" evidence="1">
    <location>
        <position position="317"/>
    </location>
    <ligand>
        <name>[4Fe-4S] cluster</name>
        <dbReference type="ChEBI" id="CHEBI:49883"/>
        <label>1</label>
    </ligand>
</feature>
<feature type="binding site" evidence="1">
    <location>
        <position position="321"/>
    </location>
    <ligand>
        <name>[4Fe-4S] cluster</name>
        <dbReference type="ChEBI" id="CHEBI:49883"/>
        <label>2</label>
    </ligand>
</feature>
<feature type="binding site" evidence="1">
    <location>
        <position position="364"/>
    </location>
    <ligand>
        <name>[4Fe-4S] cluster</name>
        <dbReference type="ChEBI" id="CHEBI:49883"/>
        <label>2</label>
    </ligand>
</feature>
<feature type="binding site" evidence="1">
    <location>
        <position position="367"/>
    </location>
    <ligand>
        <name>[4Fe-4S] cluster</name>
        <dbReference type="ChEBI" id="CHEBI:49883"/>
        <label>2</label>
    </ligand>
</feature>
<feature type="binding site" evidence="1">
    <location>
        <position position="371"/>
    </location>
    <ligand>
        <name>[4Fe-4S] cluster</name>
        <dbReference type="ChEBI" id="CHEBI:49883"/>
        <label>1</label>
    </ligand>
</feature>
<accession>A9VKN1</accession>
<gene>
    <name evidence="1" type="primary">lutB2</name>
    <name type="ordered locus">BcerKBAB4_1219</name>
</gene>
<protein>
    <recommendedName>
        <fullName evidence="1">Lactate utilization protein B 2</fullName>
    </recommendedName>
</protein>
<proteinExistence type="inferred from homology"/>
<organism>
    <name type="scientific">Bacillus mycoides (strain KBAB4)</name>
    <name type="common">Bacillus weihenstephanensis</name>
    <dbReference type="NCBI Taxonomy" id="315730"/>
    <lineage>
        <taxon>Bacteria</taxon>
        <taxon>Bacillati</taxon>
        <taxon>Bacillota</taxon>
        <taxon>Bacilli</taxon>
        <taxon>Bacillales</taxon>
        <taxon>Bacillaceae</taxon>
        <taxon>Bacillus</taxon>
        <taxon>Bacillus cereus group</taxon>
    </lineage>
</organism>
<keyword id="KW-0004">4Fe-4S</keyword>
<keyword id="KW-0249">Electron transport</keyword>
<keyword id="KW-0408">Iron</keyword>
<keyword id="KW-0411">Iron-sulfur</keyword>
<keyword id="KW-0479">Metal-binding</keyword>
<keyword id="KW-0677">Repeat</keyword>
<keyword id="KW-0813">Transport</keyword>
<sequence>MSMKISEKKFNDRVGDGIQDSFMRGAVSSAQTRLYTNRLKAADELGNWEEWRELGEQIRQHTLENLDYYLMQLSENVSKRGGHVYFAKTKEDAAKYIQDVAKKKQAKKVVKSKSMVTEEISMNHALEEIGCEVLESDLGEYILQVDNDPPSHIIAPALHKNRTQIRDVFKEKLGYENSDDPYEMTKFVRKQLREKFMDAEIGVTGCNFAVANTGSLCLVTNEGNADLVMSIPKTQIAVMGMERMVPTMEELDVLVGLLCRSAVGQKLTSYVTVAGPIQEEEVDGPEEFHLVVVDNGRSQILGSEFRSILQCIRCAACVNVCPVYRHVGGHSYGSIYSGPIGAVLTPLLGGYDDYKELPYASSLCGACTEACPVKIPLHDLLLKHRQVIVEQEGRAPLAEKLAMKMFSMGASSAALYKMGSKMAPAAMSPFTSGNRVSKGVGPLKNWTDIREFPAPSKERFRDWYKNHKKGGDK</sequence>
<reference key="1">
    <citation type="journal article" date="2008" name="Chem. Biol. Interact.">
        <title>Extending the Bacillus cereus group genomics to putative food-borne pathogens of different toxicity.</title>
        <authorList>
            <person name="Lapidus A."/>
            <person name="Goltsman E."/>
            <person name="Auger S."/>
            <person name="Galleron N."/>
            <person name="Segurens B."/>
            <person name="Dossat C."/>
            <person name="Land M.L."/>
            <person name="Broussolle V."/>
            <person name="Brillard J."/>
            <person name="Guinebretiere M.-H."/>
            <person name="Sanchis V."/>
            <person name="Nguen-the C."/>
            <person name="Lereclus D."/>
            <person name="Richardson P."/>
            <person name="Wincker P."/>
            <person name="Weissenbach J."/>
            <person name="Ehrlich S.D."/>
            <person name="Sorokin A."/>
        </authorList>
    </citation>
    <scope>NUCLEOTIDE SEQUENCE [LARGE SCALE GENOMIC DNA]</scope>
    <source>
        <strain>KBAB4</strain>
    </source>
</reference>
<comment type="function">
    <text evidence="1">Is involved in L-lactate degradation and allows cells to grow with lactate as the sole carbon source. Has probably a role as an electron transporter during oxidation of L-lactate.</text>
</comment>
<comment type="similarity">
    <text evidence="1">Belongs to the LutB/YkgF family.</text>
</comment>